<feature type="transit peptide" description="Mitochondrion" evidence="2">
    <location>
        <begin position="1"/>
        <end position="87"/>
    </location>
</feature>
<feature type="chain" id="PRO_0000412578" description="Chaperone protein ClpB3, mitochondrial">
    <location>
        <begin position="88"/>
        <end position="983"/>
    </location>
</feature>
<feature type="domain" description="Clp R" evidence="3">
    <location>
        <begin position="97"/>
        <end position="240"/>
    </location>
</feature>
<feature type="region of interest" description="Repeat 1" evidence="3">
    <location>
        <begin position="100"/>
        <end position="165"/>
    </location>
</feature>
<feature type="region of interest" description="Repeat 2" evidence="3">
    <location>
        <begin position="177"/>
        <end position="240"/>
    </location>
</feature>
<feature type="region of interest" description="I" evidence="1">
    <location>
        <begin position="255"/>
        <end position="503"/>
    </location>
</feature>
<feature type="region of interest" description="II" evidence="1">
    <location>
        <begin position="629"/>
        <end position="820"/>
    </location>
</feature>
<feature type="coiled-coil region" evidence="2">
    <location>
        <begin position="504"/>
        <end position="627"/>
    </location>
</feature>
<feature type="binding site" evidence="2">
    <location>
        <begin position="300"/>
        <end position="307"/>
    </location>
    <ligand>
        <name>ATP</name>
        <dbReference type="ChEBI" id="CHEBI:30616"/>
    </ligand>
</feature>
<feature type="binding site" evidence="2">
    <location>
        <begin position="703"/>
        <end position="710"/>
    </location>
    <ligand>
        <name>ATP</name>
        <dbReference type="ChEBI" id="CHEBI:30616"/>
    </ligand>
</feature>
<feature type="sequence conflict" description="In Ref. 4; AK287906." evidence="5" ref="4">
    <original>E</original>
    <variation>G</variation>
    <location>
        <position position="264"/>
    </location>
</feature>
<accession>Q0E3C8</accession>
<accession>A0A0N7KET5</accession>
<keyword id="KW-0067">ATP-binding</keyword>
<keyword id="KW-0143">Chaperone</keyword>
<keyword id="KW-0175">Coiled coil</keyword>
<keyword id="KW-0496">Mitochondrion</keyword>
<keyword id="KW-0547">Nucleotide-binding</keyword>
<keyword id="KW-1185">Reference proteome</keyword>
<keyword id="KW-0677">Repeat</keyword>
<keyword id="KW-0809">Transit peptide</keyword>
<gene>
    <name type="primary">CLPB3</name>
    <name type="synonym">CLPB-M</name>
    <name type="ordered locus">Os02g0181900</name>
    <name type="ordered locus">LOC_Os02g08490</name>
</gene>
<sequence>MSRATAVSRLARAARAAAAARRHHAGGRDPLRALASLAGDASASAGGGARRPAWFAPPMGRLGGGGLLVPPPPPQRRLFHPTQAARYSTSSSSQITPGEFTEMAWEGVVGAVDAARMSKQQVVEAEHLMKALLEQKDGLARRIFSKAGIDNTSVLQATDEFISRQPKVVGDTSGPIIGSSFVSILDNARKHKKEYADEFVSVEHILRAFTEDKRFGQQLFRDLKIGENELKEAISAVRGSQRVTDQNPEGKYQALEKYGIDMTELARRGKLDPVIGRDDEVRRCIQILCRRTKNNPVIIGEPGVGKTAIAEGLAQRIVRGDVPEPLQNRKLISLDMGALLAGAKFQGQFEERLKAVLKEITASNGQIILFIDEIHTIVGAGAAGGAMDAGNLLKPMLGRGELRCIGATTLDEYRKYIEKDAALERRFQQVYCGEPAVEDTISILRGLRERYELHHGVKISDGALVSAAVLSDRYITGRFLPDKAIDLVDEAAAKLKMEITSKPIELDEVDREIIRLEMEKLSLKNDTDKASKQRLSKLEADLESLKQKQKNLSEHWEYEKSLMTRIRSIKEETDRVNLEIEAAEREYDLNRAAELKYGTLLSLQKQLEEAENKLMEFQQSGKSMLREEVTDVDIAEIVSKWTGIPVSNLQQSEKEKLLLLEDVLHKRVIGQDIAVKSVANAIRRSRAGLSDPNRPIASLMFMGPTGVGKTELGKTLAEFLFNTENALIRIDMSEYMEKHAVSRLVGAPPGYIGYGEGGQLTEAVRRRPYSVVLFDEIEKAHQDVFNILLQLLDDGRITDSQGRTVSFTNCVIIMTSNIGSPLILDTLRNTSDSKEAVYEIMKKQVIDMARQSFRPEFLNRIDEYIVFQPLDTTEINRIVEIQLNRVKNRLRQQKIHLQYTPEAVEHLGSLGFDPNYGARPVKRVIQQMVENEIALSVLKGDFKEDDTVLVDVSSVAIAKGLAPQKKLVLQRLENANLELVAND</sequence>
<proteinExistence type="evidence at transcript level"/>
<comment type="function">
    <text>Molecular chaperone that may not be involved in heat stress response or tolerance.</text>
</comment>
<comment type="subcellular location">
    <subcellularLocation>
        <location evidence="4">Mitochondrion</location>
    </subcellularLocation>
</comment>
<comment type="induction">
    <text evidence="4">By heat and oxidative stresses, and abscisic acid (ABA).</text>
</comment>
<comment type="similarity">
    <text evidence="5">Belongs to the ClpA/ClpB family.</text>
</comment>
<protein>
    <recommendedName>
        <fullName>Chaperone protein ClpB3, mitochondrial</fullName>
    </recommendedName>
    <alternativeName>
        <fullName>ATP-dependent Clp protease ATP-binding subunit ClpB homolog 3</fullName>
    </alternativeName>
    <alternativeName>
        <fullName>Casein lytic proteinase B3</fullName>
    </alternativeName>
</protein>
<evidence type="ECO:0000250" key="1"/>
<evidence type="ECO:0000255" key="2"/>
<evidence type="ECO:0000255" key="3">
    <source>
        <dbReference type="PROSITE-ProRule" id="PRU01251"/>
    </source>
</evidence>
<evidence type="ECO:0000269" key="4">
    <source>
    </source>
</evidence>
<evidence type="ECO:0000305" key="5"/>
<name>CLPB3_ORYSJ</name>
<organism>
    <name type="scientific">Oryza sativa subsp. japonica</name>
    <name type="common">Rice</name>
    <dbReference type="NCBI Taxonomy" id="39947"/>
    <lineage>
        <taxon>Eukaryota</taxon>
        <taxon>Viridiplantae</taxon>
        <taxon>Streptophyta</taxon>
        <taxon>Embryophyta</taxon>
        <taxon>Tracheophyta</taxon>
        <taxon>Spermatophyta</taxon>
        <taxon>Magnoliopsida</taxon>
        <taxon>Liliopsida</taxon>
        <taxon>Poales</taxon>
        <taxon>Poaceae</taxon>
        <taxon>BOP clade</taxon>
        <taxon>Oryzoideae</taxon>
        <taxon>Oryzeae</taxon>
        <taxon>Oryzinae</taxon>
        <taxon>Oryza</taxon>
        <taxon>Oryza sativa</taxon>
    </lineage>
</organism>
<dbReference type="EMBL" id="AP008208">
    <property type="protein sequence ID" value="BAF08010.2"/>
    <property type="molecule type" value="Genomic_DNA"/>
</dbReference>
<dbReference type="EMBL" id="AP014958">
    <property type="protein sequence ID" value="BAS77313.1"/>
    <property type="molecule type" value="Genomic_DNA"/>
</dbReference>
<dbReference type="EMBL" id="AK287906">
    <property type="status" value="NOT_ANNOTATED_CDS"/>
    <property type="molecule type" value="mRNA"/>
</dbReference>
<dbReference type="RefSeq" id="XP_015627597.1">
    <property type="nucleotide sequence ID" value="XM_015772111.1"/>
</dbReference>
<dbReference type="SMR" id="Q0E3C8"/>
<dbReference type="FunCoup" id="Q0E3C8">
    <property type="interactions" value="1324"/>
</dbReference>
<dbReference type="STRING" id="39947.Q0E3C8"/>
<dbReference type="PaxDb" id="39947-Q0E3C8"/>
<dbReference type="EnsemblPlants" id="Os02t0181900-01">
    <property type="protein sequence ID" value="Os02t0181900-01"/>
    <property type="gene ID" value="Os02g0181900"/>
</dbReference>
<dbReference type="Gramene" id="Os02t0181900-01">
    <property type="protein sequence ID" value="Os02t0181900-01"/>
    <property type="gene ID" value="Os02g0181900"/>
</dbReference>
<dbReference type="KEGG" id="dosa:Os02g0181900"/>
<dbReference type="eggNOG" id="KOG1051">
    <property type="taxonomic scope" value="Eukaryota"/>
</dbReference>
<dbReference type="HOGENOM" id="CLU_005070_4_2_1"/>
<dbReference type="InParanoid" id="Q0E3C8"/>
<dbReference type="OMA" id="IDLHYTK"/>
<dbReference type="OrthoDB" id="47330at2759"/>
<dbReference type="Proteomes" id="UP000000763">
    <property type="component" value="Chromosome 2"/>
</dbReference>
<dbReference type="Proteomes" id="UP000059680">
    <property type="component" value="Chromosome 2"/>
</dbReference>
<dbReference type="GO" id="GO:0005737">
    <property type="term" value="C:cytoplasm"/>
    <property type="evidence" value="ECO:0000318"/>
    <property type="project" value="GO_Central"/>
</dbReference>
<dbReference type="GO" id="GO:0005739">
    <property type="term" value="C:mitochondrion"/>
    <property type="evidence" value="ECO:0000314"/>
    <property type="project" value="UniProtKB"/>
</dbReference>
<dbReference type="GO" id="GO:0005524">
    <property type="term" value="F:ATP binding"/>
    <property type="evidence" value="ECO:0007669"/>
    <property type="project" value="UniProtKB-KW"/>
</dbReference>
<dbReference type="GO" id="GO:0016887">
    <property type="term" value="F:ATP hydrolysis activity"/>
    <property type="evidence" value="ECO:0000318"/>
    <property type="project" value="GO_Central"/>
</dbReference>
<dbReference type="GO" id="GO:0034605">
    <property type="term" value="P:cellular response to heat"/>
    <property type="evidence" value="ECO:0000318"/>
    <property type="project" value="GO_Central"/>
</dbReference>
<dbReference type="GO" id="GO:0042026">
    <property type="term" value="P:protein refolding"/>
    <property type="evidence" value="ECO:0007669"/>
    <property type="project" value="InterPro"/>
</dbReference>
<dbReference type="CDD" id="cd00009">
    <property type="entry name" value="AAA"/>
    <property type="match status" value="1"/>
</dbReference>
<dbReference type="CDD" id="cd19499">
    <property type="entry name" value="RecA-like_ClpB_Hsp104-like"/>
    <property type="match status" value="1"/>
</dbReference>
<dbReference type="FunFam" id="1.10.8.60:FF:000017">
    <property type="entry name" value="ATP-dependent chaperone ClpB"/>
    <property type="match status" value="1"/>
</dbReference>
<dbReference type="FunFam" id="3.40.50.300:FF:000120">
    <property type="entry name" value="ATP-dependent chaperone ClpB"/>
    <property type="match status" value="1"/>
</dbReference>
<dbReference type="FunFam" id="3.40.50.300:FF:000025">
    <property type="entry name" value="ATP-dependent Clp protease subunit"/>
    <property type="match status" value="1"/>
</dbReference>
<dbReference type="FunFam" id="3.40.50.300:FF:000010">
    <property type="entry name" value="Chaperone clpB 1, putative"/>
    <property type="match status" value="1"/>
</dbReference>
<dbReference type="FunFam" id="1.10.1780.10:FF:000006">
    <property type="entry name" value="Chaperone protein ClpB3, chloroplastic"/>
    <property type="match status" value="1"/>
</dbReference>
<dbReference type="Gene3D" id="1.10.8.60">
    <property type="match status" value="1"/>
</dbReference>
<dbReference type="Gene3D" id="1.10.1780.10">
    <property type="entry name" value="Clp, N-terminal domain"/>
    <property type="match status" value="1"/>
</dbReference>
<dbReference type="Gene3D" id="3.40.50.300">
    <property type="entry name" value="P-loop containing nucleotide triphosphate hydrolases"/>
    <property type="match status" value="3"/>
</dbReference>
<dbReference type="InterPro" id="IPR003593">
    <property type="entry name" value="AAA+_ATPase"/>
</dbReference>
<dbReference type="InterPro" id="IPR003959">
    <property type="entry name" value="ATPase_AAA_core"/>
</dbReference>
<dbReference type="InterPro" id="IPR017730">
    <property type="entry name" value="Chaperonin_ClpB"/>
</dbReference>
<dbReference type="InterPro" id="IPR019489">
    <property type="entry name" value="Clp_ATPase_C"/>
</dbReference>
<dbReference type="InterPro" id="IPR036628">
    <property type="entry name" value="Clp_N_dom_sf"/>
</dbReference>
<dbReference type="InterPro" id="IPR004176">
    <property type="entry name" value="Clp_R_dom"/>
</dbReference>
<dbReference type="InterPro" id="IPR001270">
    <property type="entry name" value="ClpA/B"/>
</dbReference>
<dbReference type="InterPro" id="IPR018368">
    <property type="entry name" value="ClpA/B_CS1"/>
</dbReference>
<dbReference type="InterPro" id="IPR028299">
    <property type="entry name" value="ClpA/B_CS2"/>
</dbReference>
<dbReference type="InterPro" id="IPR041546">
    <property type="entry name" value="ClpA/ClpB_AAA_lid"/>
</dbReference>
<dbReference type="InterPro" id="IPR050130">
    <property type="entry name" value="ClpA_ClpB"/>
</dbReference>
<dbReference type="InterPro" id="IPR027417">
    <property type="entry name" value="P-loop_NTPase"/>
</dbReference>
<dbReference type="NCBIfam" id="TIGR03346">
    <property type="entry name" value="chaperone_ClpB"/>
    <property type="match status" value="1"/>
</dbReference>
<dbReference type="PANTHER" id="PTHR11638">
    <property type="entry name" value="ATP-DEPENDENT CLP PROTEASE"/>
    <property type="match status" value="1"/>
</dbReference>
<dbReference type="PANTHER" id="PTHR11638:SF86">
    <property type="entry name" value="CHAPERONE PROTEIN CLPB4, MITOCHONDRIAL"/>
    <property type="match status" value="1"/>
</dbReference>
<dbReference type="Pfam" id="PF00004">
    <property type="entry name" value="AAA"/>
    <property type="match status" value="1"/>
</dbReference>
<dbReference type="Pfam" id="PF07724">
    <property type="entry name" value="AAA_2"/>
    <property type="match status" value="1"/>
</dbReference>
<dbReference type="Pfam" id="PF17871">
    <property type="entry name" value="AAA_lid_9"/>
    <property type="match status" value="1"/>
</dbReference>
<dbReference type="Pfam" id="PF02861">
    <property type="entry name" value="Clp_N"/>
    <property type="match status" value="2"/>
</dbReference>
<dbReference type="Pfam" id="PF10431">
    <property type="entry name" value="ClpB_D2-small"/>
    <property type="match status" value="1"/>
</dbReference>
<dbReference type="PRINTS" id="PR00300">
    <property type="entry name" value="CLPPROTEASEA"/>
</dbReference>
<dbReference type="SMART" id="SM00382">
    <property type="entry name" value="AAA"/>
    <property type="match status" value="2"/>
</dbReference>
<dbReference type="SMART" id="SM01086">
    <property type="entry name" value="ClpB_D2-small"/>
    <property type="match status" value="1"/>
</dbReference>
<dbReference type="SUPFAM" id="SSF81923">
    <property type="entry name" value="Double Clp-N motif"/>
    <property type="match status" value="1"/>
</dbReference>
<dbReference type="SUPFAM" id="SSF52540">
    <property type="entry name" value="P-loop containing nucleoside triphosphate hydrolases"/>
    <property type="match status" value="2"/>
</dbReference>
<dbReference type="PROSITE" id="PS51903">
    <property type="entry name" value="CLP_R"/>
    <property type="match status" value="1"/>
</dbReference>
<dbReference type="PROSITE" id="PS00870">
    <property type="entry name" value="CLPAB_1"/>
    <property type="match status" value="1"/>
</dbReference>
<reference key="1">
    <citation type="journal article" date="2005" name="Nature">
        <title>The map-based sequence of the rice genome.</title>
        <authorList>
            <consortium name="International rice genome sequencing project (IRGSP)"/>
        </authorList>
    </citation>
    <scope>NUCLEOTIDE SEQUENCE [LARGE SCALE GENOMIC DNA]</scope>
    <source>
        <strain>cv. Nipponbare</strain>
    </source>
</reference>
<reference key="2">
    <citation type="journal article" date="2008" name="Nucleic Acids Res.">
        <title>The rice annotation project database (RAP-DB): 2008 update.</title>
        <authorList>
            <consortium name="The rice annotation project (RAP)"/>
        </authorList>
    </citation>
    <scope>GENOME REANNOTATION</scope>
    <source>
        <strain>cv. Nipponbare</strain>
    </source>
</reference>
<reference key="3">
    <citation type="journal article" date="2013" name="Rice">
        <title>Improvement of the Oryza sativa Nipponbare reference genome using next generation sequence and optical map data.</title>
        <authorList>
            <person name="Kawahara Y."/>
            <person name="de la Bastide M."/>
            <person name="Hamilton J.P."/>
            <person name="Kanamori H."/>
            <person name="McCombie W.R."/>
            <person name="Ouyang S."/>
            <person name="Schwartz D.C."/>
            <person name="Tanaka T."/>
            <person name="Wu J."/>
            <person name="Zhou S."/>
            <person name="Childs K.L."/>
            <person name="Davidson R.M."/>
            <person name="Lin H."/>
            <person name="Quesada-Ocampo L."/>
            <person name="Vaillancourt B."/>
            <person name="Sakai H."/>
            <person name="Lee S.S."/>
            <person name="Kim J."/>
            <person name="Numa H."/>
            <person name="Itoh T."/>
            <person name="Buell C.R."/>
            <person name="Matsumoto T."/>
        </authorList>
    </citation>
    <scope>GENOME REANNOTATION</scope>
    <source>
        <strain>cv. Nipponbare</strain>
    </source>
</reference>
<reference key="4">
    <citation type="submission" date="2007-09" db="EMBL/GenBank/DDBJ databases">
        <title>Oryza sativa full length cDNA.</title>
        <authorList>
            <consortium name="The rice full-length cDNA consortium"/>
        </authorList>
    </citation>
    <scope>NUCLEOTIDE SEQUENCE [LARGE SCALE MRNA]</scope>
    <source>
        <strain>cv. Nipponbare</strain>
    </source>
</reference>
<reference key="5">
    <citation type="journal article" date="2010" name="BMC Genomics">
        <title>Genome-wide analysis of rice ClpB/HSP100, ClpC and ClpD genes.</title>
        <authorList>
            <person name="Singh A."/>
            <person name="Singh U."/>
            <person name="Mittal D."/>
            <person name="Grover A."/>
        </authorList>
    </citation>
    <scope>SUBCELLULAR LOCATION</scope>
    <scope>INDUCTION</scope>
</reference>